<accession>Q5KYR2</accession>
<reference key="1">
    <citation type="journal article" date="2004" name="Nucleic Acids Res.">
        <title>Thermoadaptation trait revealed by the genome sequence of thermophilic Geobacillus kaustophilus.</title>
        <authorList>
            <person name="Takami H."/>
            <person name="Takaki Y."/>
            <person name="Chee G.-J."/>
            <person name="Nishi S."/>
            <person name="Shimamura S."/>
            <person name="Suzuki H."/>
            <person name="Matsui S."/>
            <person name="Uchiyama I."/>
        </authorList>
    </citation>
    <scope>NUCLEOTIDE SEQUENCE [LARGE SCALE GENOMIC DNA]</scope>
    <source>
        <strain>HTA426</strain>
    </source>
</reference>
<organism>
    <name type="scientific">Geobacillus kaustophilus (strain HTA426)</name>
    <dbReference type="NCBI Taxonomy" id="235909"/>
    <lineage>
        <taxon>Bacteria</taxon>
        <taxon>Bacillati</taxon>
        <taxon>Bacillota</taxon>
        <taxon>Bacilli</taxon>
        <taxon>Bacillales</taxon>
        <taxon>Anoxybacillaceae</taxon>
        <taxon>Geobacillus</taxon>
        <taxon>Geobacillus thermoleovorans group</taxon>
    </lineage>
</organism>
<evidence type="ECO:0000255" key="1">
    <source>
        <dbReference type="HAMAP-Rule" id="MF_01673"/>
    </source>
</evidence>
<proteinExistence type="inferred from homology"/>
<feature type="chain" id="PRO_0000352387" description="5-deoxy-glucuronate isomerase">
    <location>
        <begin position="1"/>
        <end position="276"/>
    </location>
</feature>
<protein>
    <recommendedName>
        <fullName evidence="1">5-deoxy-glucuronate isomerase</fullName>
        <shortName evidence="1">5DG isomerase</shortName>
        <ecNumber evidence="1">5.3.1.30</ecNumber>
    </recommendedName>
</protein>
<comment type="function">
    <text evidence="1">Involved in the isomerization of 5-deoxy-glucuronate (5DG) to 5-dehydro-2-deoxy-D-gluconate (DKG or 2-deoxy-5-keto-D-gluconate).</text>
</comment>
<comment type="catalytic activity">
    <reaction evidence="1">
        <text>5-deoxy-D-glucuronate = 5-dehydro-2-deoxy-D-gluconate</text>
        <dbReference type="Rhea" id="RHEA:25840"/>
        <dbReference type="ChEBI" id="CHEBI:16669"/>
        <dbReference type="ChEBI" id="CHEBI:58852"/>
        <dbReference type="EC" id="5.3.1.30"/>
    </reaction>
</comment>
<comment type="pathway">
    <text evidence="1">Polyol metabolism; myo-inositol degradation into acetyl-CoA; acetyl-CoA from myo-inositol: step 4/7.</text>
</comment>
<comment type="similarity">
    <text evidence="1">Belongs to the isomerase IolB family.</text>
</comment>
<dbReference type="EC" id="5.3.1.30" evidence="1"/>
<dbReference type="EMBL" id="BA000043">
    <property type="protein sequence ID" value="BAD76174.1"/>
    <property type="molecule type" value="Genomic_DNA"/>
</dbReference>
<dbReference type="RefSeq" id="WP_011231379.1">
    <property type="nucleotide sequence ID" value="NC_006510.1"/>
</dbReference>
<dbReference type="SMR" id="Q5KYR2"/>
<dbReference type="STRING" id="235909.GK1889"/>
<dbReference type="GeneID" id="32063756"/>
<dbReference type="KEGG" id="gka:GK1889"/>
<dbReference type="eggNOG" id="COG3718">
    <property type="taxonomic scope" value="Bacteria"/>
</dbReference>
<dbReference type="HOGENOM" id="CLU_066438_1_0_9"/>
<dbReference type="UniPathway" id="UPA00076">
    <property type="reaction ID" value="UER00920"/>
</dbReference>
<dbReference type="Proteomes" id="UP000001172">
    <property type="component" value="Chromosome"/>
</dbReference>
<dbReference type="GO" id="GO:0102482">
    <property type="term" value="F:5-deoxy-D-glucuronate isomerase activity"/>
    <property type="evidence" value="ECO:0007669"/>
    <property type="project" value="UniProtKB-EC"/>
</dbReference>
<dbReference type="GO" id="GO:0008880">
    <property type="term" value="F:glucuronate isomerase activity"/>
    <property type="evidence" value="ECO:0007669"/>
    <property type="project" value="InterPro"/>
</dbReference>
<dbReference type="GO" id="GO:0019310">
    <property type="term" value="P:inositol catabolic process"/>
    <property type="evidence" value="ECO:0007669"/>
    <property type="project" value="UniProtKB-UniRule"/>
</dbReference>
<dbReference type="Gene3D" id="2.60.120.10">
    <property type="entry name" value="Jelly Rolls"/>
    <property type="match status" value="2"/>
</dbReference>
<dbReference type="HAMAP" id="MF_01673">
    <property type="entry name" value="IolB"/>
    <property type="match status" value="1"/>
</dbReference>
<dbReference type="InterPro" id="IPR024203">
    <property type="entry name" value="Deoxy-glucuronate_isom_IolB"/>
</dbReference>
<dbReference type="InterPro" id="IPR023770">
    <property type="entry name" value="IolB_Bacilli"/>
</dbReference>
<dbReference type="InterPro" id="IPR021120">
    <property type="entry name" value="KduI/IolB_isomerase"/>
</dbReference>
<dbReference type="InterPro" id="IPR014710">
    <property type="entry name" value="RmlC-like_jellyroll"/>
</dbReference>
<dbReference type="InterPro" id="IPR011051">
    <property type="entry name" value="RmlC_Cupin_sf"/>
</dbReference>
<dbReference type="NCBIfam" id="TIGR04378">
    <property type="entry name" value="myo_inos_iolB"/>
    <property type="match status" value="1"/>
</dbReference>
<dbReference type="PANTHER" id="PTHR39193">
    <property type="entry name" value="5-DEOXY-GLUCURONATE ISOMERASE"/>
    <property type="match status" value="1"/>
</dbReference>
<dbReference type="PANTHER" id="PTHR39193:SF1">
    <property type="entry name" value="5-DEOXY-GLUCURONATE ISOMERASE"/>
    <property type="match status" value="1"/>
</dbReference>
<dbReference type="Pfam" id="PF04962">
    <property type="entry name" value="KduI"/>
    <property type="match status" value="1"/>
</dbReference>
<dbReference type="PIRSF" id="PIRSF036628">
    <property type="entry name" value="IolB"/>
    <property type="match status" value="1"/>
</dbReference>
<dbReference type="SUPFAM" id="SSF51182">
    <property type="entry name" value="RmlC-like cupins"/>
    <property type="match status" value="1"/>
</dbReference>
<sequence length="276" mass="31186">MSRLIIPSHSPNEEGNVVRVTPESVGWEYVGFEVYVLAKGQTLRKETKDQEACLVLLKGKANISTKLERWEQIGLRMDVFEKVPPYSVYVPANDVYEVEAMTDVEVAVCLAPGKGTYPARLIPPSEVGVEIRGAGNIERRVHNILPESQPADSLLVVEVFTPEGNWSSYPPHKHDQDNLPHESYLEETYYHKINPGHGFMVQRVYTDDRSIDETMVVKNGDVVLVPKGYHPVSAPPGYEGYYLNVMAGPVRTWKFHNDPDHDWVMESKLAAKQKEK</sequence>
<keyword id="KW-0413">Isomerase</keyword>
<keyword id="KW-1185">Reference proteome</keyword>
<gene>
    <name evidence="1" type="primary">iolB</name>
    <name type="ordered locus">GK1889</name>
</gene>
<name>IOLB_GEOKA</name>